<comment type="function">
    <text evidence="1">Catalyzes the attachment of proline to tRNA(Pro) in a two-step reaction: proline is first activated by ATP to form Pro-AMP and then transferred to the acceptor end of tRNA(Pro).</text>
</comment>
<comment type="catalytic activity">
    <reaction evidence="1">
        <text>tRNA(Pro) + L-proline + ATP = L-prolyl-tRNA(Pro) + AMP + diphosphate</text>
        <dbReference type="Rhea" id="RHEA:14305"/>
        <dbReference type="Rhea" id="RHEA-COMP:9700"/>
        <dbReference type="Rhea" id="RHEA-COMP:9702"/>
        <dbReference type="ChEBI" id="CHEBI:30616"/>
        <dbReference type="ChEBI" id="CHEBI:33019"/>
        <dbReference type="ChEBI" id="CHEBI:60039"/>
        <dbReference type="ChEBI" id="CHEBI:78442"/>
        <dbReference type="ChEBI" id="CHEBI:78532"/>
        <dbReference type="ChEBI" id="CHEBI:456215"/>
        <dbReference type="EC" id="6.1.1.15"/>
    </reaction>
</comment>
<comment type="subunit">
    <text evidence="1">Homodimer.</text>
</comment>
<comment type="subcellular location">
    <subcellularLocation>
        <location evidence="1">Cytoplasm</location>
    </subcellularLocation>
</comment>
<comment type="similarity">
    <text evidence="1">Belongs to the class-II aminoacyl-tRNA synthetase family. ProS type 2 subfamily.</text>
</comment>
<reference key="1">
    <citation type="submission" date="2008-02" db="EMBL/GenBank/DDBJ databases">
        <title>Complete sequence of chromosome of Methylobacterium sp. 4-46.</title>
        <authorList>
            <consortium name="US DOE Joint Genome Institute"/>
            <person name="Copeland A."/>
            <person name="Lucas S."/>
            <person name="Lapidus A."/>
            <person name="Glavina del Rio T."/>
            <person name="Dalin E."/>
            <person name="Tice H."/>
            <person name="Bruce D."/>
            <person name="Goodwin L."/>
            <person name="Pitluck S."/>
            <person name="Chertkov O."/>
            <person name="Brettin T."/>
            <person name="Detter J.C."/>
            <person name="Han C."/>
            <person name="Kuske C.R."/>
            <person name="Schmutz J."/>
            <person name="Larimer F."/>
            <person name="Land M."/>
            <person name="Hauser L."/>
            <person name="Kyrpides N."/>
            <person name="Ivanova N."/>
            <person name="Marx C.J."/>
            <person name="Richardson P."/>
        </authorList>
    </citation>
    <scope>NUCLEOTIDE SEQUENCE [LARGE SCALE GENOMIC DNA]</scope>
    <source>
        <strain>4-46</strain>
    </source>
</reference>
<sequence length="444" mass="49688">MRLSRYFLPILRETPKEAEIVSHRLMLRAGMIRQEAAGIYAWLPLGLRVLNRVVEVIRAEQDRSGAIELLMPTIQSAELWRESGRYEAYGKEMLRIRDRHEREMLFGPTNEEMITAIFRSAVRSYKDLPKSLYHIQWKFRDEVRPRFGTMRSREFLMKDAYSFDLDEAGARHAYNKMFVAYLRTFARLGLKAIPMRAETGPIGGNLSHEFIILAQTGESEVYCDRAYLDFPIPPGSTDFDDVAALQATVDHWTSRYAATSEMHEPERFAAVPEEARMAARGIEVGHIFYFGTKYSEPMGARVTGPDGQERPVHMGSYGIGPSRLVAAIIEASHDEAGIVWPDAVAPFDVGLLNLKTGDIATDAACARIQEQLEAAGLSVLYDDRDERPGAKFATADLIGLPWQVIVGPKGLAEGQVELKRRATGERETVAPDALAARLRRGAAG</sequence>
<keyword id="KW-0030">Aminoacyl-tRNA synthetase</keyword>
<keyword id="KW-0067">ATP-binding</keyword>
<keyword id="KW-0963">Cytoplasm</keyword>
<keyword id="KW-0436">Ligase</keyword>
<keyword id="KW-0547">Nucleotide-binding</keyword>
<keyword id="KW-0648">Protein biosynthesis</keyword>
<gene>
    <name evidence="1" type="primary">proS</name>
    <name type="ordered locus">M446_4408</name>
</gene>
<dbReference type="EC" id="6.1.1.15" evidence="1"/>
<dbReference type="EMBL" id="CP000943">
    <property type="protein sequence ID" value="ACA18750.1"/>
    <property type="molecule type" value="Genomic_DNA"/>
</dbReference>
<dbReference type="RefSeq" id="WP_012334139.1">
    <property type="nucleotide sequence ID" value="NC_010511.1"/>
</dbReference>
<dbReference type="SMR" id="B0ULM2"/>
<dbReference type="STRING" id="426117.M446_4408"/>
<dbReference type="KEGG" id="met:M446_4408"/>
<dbReference type="eggNOG" id="COG0442">
    <property type="taxonomic scope" value="Bacteria"/>
</dbReference>
<dbReference type="HOGENOM" id="CLU_016739_4_2_5"/>
<dbReference type="GO" id="GO:0005829">
    <property type="term" value="C:cytosol"/>
    <property type="evidence" value="ECO:0007669"/>
    <property type="project" value="TreeGrafter"/>
</dbReference>
<dbReference type="GO" id="GO:0005524">
    <property type="term" value="F:ATP binding"/>
    <property type="evidence" value="ECO:0007669"/>
    <property type="project" value="UniProtKB-UniRule"/>
</dbReference>
<dbReference type="GO" id="GO:0004827">
    <property type="term" value="F:proline-tRNA ligase activity"/>
    <property type="evidence" value="ECO:0007669"/>
    <property type="project" value="UniProtKB-UniRule"/>
</dbReference>
<dbReference type="GO" id="GO:0006433">
    <property type="term" value="P:prolyl-tRNA aminoacylation"/>
    <property type="evidence" value="ECO:0007669"/>
    <property type="project" value="UniProtKB-UniRule"/>
</dbReference>
<dbReference type="CDD" id="cd00861">
    <property type="entry name" value="ProRS_anticodon_short"/>
    <property type="match status" value="1"/>
</dbReference>
<dbReference type="CDD" id="cd00779">
    <property type="entry name" value="ProRS_core_prok"/>
    <property type="match status" value="1"/>
</dbReference>
<dbReference type="FunFam" id="3.30.930.10:FF:000042">
    <property type="entry name" value="probable proline--tRNA ligase, mitochondrial"/>
    <property type="match status" value="1"/>
</dbReference>
<dbReference type="FunFam" id="3.40.50.800:FF:000032">
    <property type="entry name" value="Proline--tRNA ligase"/>
    <property type="match status" value="1"/>
</dbReference>
<dbReference type="Gene3D" id="3.40.50.800">
    <property type="entry name" value="Anticodon-binding domain"/>
    <property type="match status" value="1"/>
</dbReference>
<dbReference type="Gene3D" id="3.30.930.10">
    <property type="entry name" value="Bira Bifunctional Protein, Domain 2"/>
    <property type="match status" value="1"/>
</dbReference>
<dbReference type="HAMAP" id="MF_01570">
    <property type="entry name" value="Pro_tRNA_synth_type2"/>
    <property type="match status" value="1"/>
</dbReference>
<dbReference type="InterPro" id="IPR002314">
    <property type="entry name" value="aa-tRNA-synt_IIb"/>
</dbReference>
<dbReference type="InterPro" id="IPR006195">
    <property type="entry name" value="aa-tRNA-synth_II"/>
</dbReference>
<dbReference type="InterPro" id="IPR045864">
    <property type="entry name" value="aa-tRNA-synth_II/BPL/LPL"/>
</dbReference>
<dbReference type="InterPro" id="IPR004154">
    <property type="entry name" value="Anticodon-bd"/>
</dbReference>
<dbReference type="InterPro" id="IPR036621">
    <property type="entry name" value="Anticodon-bd_dom_sf"/>
</dbReference>
<dbReference type="InterPro" id="IPR002316">
    <property type="entry name" value="Pro-tRNA-ligase_IIa"/>
</dbReference>
<dbReference type="InterPro" id="IPR004500">
    <property type="entry name" value="Pro-tRNA-synth_IIa_bac-type"/>
</dbReference>
<dbReference type="InterPro" id="IPR050062">
    <property type="entry name" value="Pro-tRNA_synthetase"/>
</dbReference>
<dbReference type="InterPro" id="IPR023716">
    <property type="entry name" value="Prolyl-tRNA_ligase_IIa_type2"/>
</dbReference>
<dbReference type="InterPro" id="IPR044140">
    <property type="entry name" value="ProRS_anticodon_short"/>
</dbReference>
<dbReference type="InterPro" id="IPR033730">
    <property type="entry name" value="ProRS_core_prok"/>
</dbReference>
<dbReference type="NCBIfam" id="NF008979">
    <property type="entry name" value="PRK12325.1"/>
    <property type="match status" value="1"/>
</dbReference>
<dbReference type="NCBIfam" id="TIGR00409">
    <property type="entry name" value="proS_fam_II"/>
    <property type="match status" value="1"/>
</dbReference>
<dbReference type="PANTHER" id="PTHR42753">
    <property type="entry name" value="MITOCHONDRIAL RIBOSOME PROTEIN L39/PROLYL-TRNA LIGASE FAMILY MEMBER"/>
    <property type="match status" value="1"/>
</dbReference>
<dbReference type="PANTHER" id="PTHR42753:SF2">
    <property type="entry name" value="PROLINE--TRNA LIGASE"/>
    <property type="match status" value="1"/>
</dbReference>
<dbReference type="Pfam" id="PF03129">
    <property type="entry name" value="HGTP_anticodon"/>
    <property type="match status" value="1"/>
</dbReference>
<dbReference type="Pfam" id="PF00587">
    <property type="entry name" value="tRNA-synt_2b"/>
    <property type="match status" value="1"/>
</dbReference>
<dbReference type="PRINTS" id="PR01046">
    <property type="entry name" value="TRNASYNTHPRO"/>
</dbReference>
<dbReference type="SUPFAM" id="SSF52954">
    <property type="entry name" value="Class II aaRS ABD-related"/>
    <property type="match status" value="1"/>
</dbReference>
<dbReference type="SUPFAM" id="SSF55681">
    <property type="entry name" value="Class II aaRS and biotin synthetases"/>
    <property type="match status" value="1"/>
</dbReference>
<dbReference type="PROSITE" id="PS50862">
    <property type="entry name" value="AA_TRNA_LIGASE_II"/>
    <property type="match status" value="1"/>
</dbReference>
<accession>B0ULM2</accession>
<name>SYP_METS4</name>
<organism>
    <name type="scientific">Methylobacterium sp. (strain 4-46)</name>
    <dbReference type="NCBI Taxonomy" id="426117"/>
    <lineage>
        <taxon>Bacteria</taxon>
        <taxon>Pseudomonadati</taxon>
        <taxon>Pseudomonadota</taxon>
        <taxon>Alphaproteobacteria</taxon>
        <taxon>Hyphomicrobiales</taxon>
        <taxon>Methylobacteriaceae</taxon>
        <taxon>Methylobacterium</taxon>
    </lineage>
</organism>
<evidence type="ECO:0000255" key="1">
    <source>
        <dbReference type="HAMAP-Rule" id="MF_01570"/>
    </source>
</evidence>
<proteinExistence type="inferred from homology"/>
<protein>
    <recommendedName>
        <fullName evidence="1">Proline--tRNA ligase</fullName>
        <ecNumber evidence="1">6.1.1.15</ecNumber>
    </recommendedName>
    <alternativeName>
        <fullName evidence="1">Prolyl-tRNA synthetase</fullName>
        <shortName evidence="1">ProRS</shortName>
    </alternativeName>
</protein>
<feature type="chain" id="PRO_1000199453" description="Proline--tRNA ligase">
    <location>
        <begin position="1"/>
        <end position="444"/>
    </location>
</feature>